<keyword id="KW-0030">Aminoacyl-tRNA synthetase</keyword>
<keyword id="KW-0067">ATP-binding</keyword>
<keyword id="KW-0963">Cytoplasm</keyword>
<keyword id="KW-0436">Ligase</keyword>
<keyword id="KW-0547">Nucleotide-binding</keyword>
<keyword id="KW-0648">Protein biosynthesis</keyword>
<keyword id="KW-1185">Reference proteome</keyword>
<gene>
    <name evidence="1" type="primary">argS</name>
    <name type="ordered locus">Rmet_0096</name>
</gene>
<accession>Q1LS94</accession>
<feature type="chain" id="PRO_1000018100" description="Arginine--tRNA ligase">
    <location>
        <begin position="1"/>
        <end position="602"/>
    </location>
</feature>
<feature type="short sequence motif" description="'HIGH' region">
    <location>
        <begin position="132"/>
        <end position="142"/>
    </location>
</feature>
<reference key="1">
    <citation type="journal article" date="2010" name="PLoS ONE">
        <title>The complete genome sequence of Cupriavidus metallidurans strain CH34, a master survivalist in harsh and anthropogenic environments.</title>
        <authorList>
            <person name="Janssen P.J."/>
            <person name="Van Houdt R."/>
            <person name="Moors H."/>
            <person name="Monsieurs P."/>
            <person name="Morin N."/>
            <person name="Michaux A."/>
            <person name="Benotmane M.A."/>
            <person name="Leys N."/>
            <person name="Vallaeys T."/>
            <person name="Lapidus A."/>
            <person name="Monchy S."/>
            <person name="Medigue C."/>
            <person name="Taghavi S."/>
            <person name="McCorkle S."/>
            <person name="Dunn J."/>
            <person name="van der Lelie D."/>
            <person name="Mergeay M."/>
        </authorList>
    </citation>
    <scope>NUCLEOTIDE SEQUENCE [LARGE SCALE GENOMIC DNA]</scope>
    <source>
        <strain>ATCC 43123 / DSM 2839 / NBRC 102507 / CH34</strain>
    </source>
</reference>
<protein>
    <recommendedName>
        <fullName evidence="1">Arginine--tRNA ligase</fullName>
        <ecNumber evidence="1">6.1.1.19</ecNumber>
    </recommendedName>
    <alternativeName>
        <fullName evidence="1">Arginyl-tRNA synthetase</fullName>
        <shortName evidence="1">ArgRS</shortName>
    </alternativeName>
</protein>
<sequence length="602" mass="65232">MLPVQTSQLAAAFTDAVRALAPADANLPAVTFERPKAAAHGDLACNIAMQVAKSLKTNPRELAQKVVDAVKADSRATALVAALEIAGPGFINLRLSPEARAEVLRAVLADGDRYGARPVGEHGQVLVEFVSANPTGPLHVGHGRQAALGDALANLLAWQGWSVHREFYYNDAGVQIHTLAISVQARARGLKPGDAGWPESAYNGDYIADIAADFLAGKTVSASDGEPVTASGNIEDLESIRKFAVTYLRNEQDIDLQAFGVKFDRYYLESSLYSDGRVEAAVQSLIAKGKTYESEGALWLRTTDDGDDKDRVMKKGDGTYTYFVPDVAYHTTKWERGFSKVINVQGSDHHGTIARVRAGLQGLDIGIPQGYPDYVLHKMVTVMKNGEEVKISKRAGSYVTVRDLIEWSNGGEETIRGCLEAGVADWPAHFTRGRDAVRFFLLSRKADTEFVFDVDLALKQNDENPVYYVQYAHARICSIFEAWGGADWEARLGELASVDLAAVTAADVSPQAIALGRRLAEFPDMLAAASSELAPHAVAFYLRDLAGDFHAFYNADRVLVDDETVKRARLALLAATRQVLKNGLAVIGVSAPQRMDREAAPA</sequence>
<proteinExistence type="inferred from homology"/>
<dbReference type="EC" id="6.1.1.19" evidence="1"/>
<dbReference type="EMBL" id="CP000352">
    <property type="protein sequence ID" value="ABF06982.1"/>
    <property type="molecule type" value="Genomic_DNA"/>
</dbReference>
<dbReference type="RefSeq" id="WP_011515017.1">
    <property type="nucleotide sequence ID" value="NC_007973.1"/>
</dbReference>
<dbReference type="SMR" id="Q1LS94"/>
<dbReference type="STRING" id="266264.Rmet_0096"/>
<dbReference type="KEGG" id="rme:Rmet_0096"/>
<dbReference type="eggNOG" id="COG0018">
    <property type="taxonomic scope" value="Bacteria"/>
</dbReference>
<dbReference type="HOGENOM" id="CLU_006406_0_1_4"/>
<dbReference type="Proteomes" id="UP000002429">
    <property type="component" value="Chromosome"/>
</dbReference>
<dbReference type="GO" id="GO:0005737">
    <property type="term" value="C:cytoplasm"/>
    <property type="evidence" value="ECO:0007669"/>
    <property type="project" value="UniProtKB-SubCell"/>
</dbReference>
<dbReference type="GO" id="GO:0004814">
    <property type="term" value="F:arginine-tRNA ligase activity"/>
    <property type="evidence" value="ECO:0007669"/>
    <property type="project" value="UniProtKB-UniRule"/>
</dbReference>
<dbReference type="GO" id="GO:0005524">
    <property type="term" value="F:ATP binding"/>
    <property type="evidence" value="ECO:0007669"/>
    <property type="project" value="UniProtKB-UniRule"/>
</dbReference>
<dbReference type="GO" id="GO:0006420">
    <property type="term" value="P:arginyl-tRNA aminoacylation"/>
    <property type="evidence" value="ECO:0007669"/>
    <property type="project" value="UniProtKB-UniRule"/>
</dbReference>
<dbReference type="CDD" id="cd07956">
    <property type="entry name" value="Anticodon_Ia_Arg"/>
    <property type="match status" value="1"/>
</dbReference>
<dbReference type="CDD" id="cd00671">
    <property type="entry name" value="ArgRS_core"/>
    <property type="match status" value="1"/>
</dbReference>
<dbReference type="FunFam" id="1.10.730.10:FF:000008">
    <property type="entry name" value="Arginine--tRNA ligase"/>
    <property type="match status" value="1"/>
</dbReference>
<dbReference type="FunFam" id="3.40.50.620:FF:000062">
    <property type="entry name" value="Arginine--tRNA ligase"/>
    <property type="match status" value="1"/>
</dbReference>
<dbReference type="Gene3D" id="3.30.1360.70">
    <property type="entry name" value="Arginyl tRNA synthetase N-terminal domain"/>
    <property type="match status" value="1"/>
</dbReference>
<dbReference type="Gene3D" id="3.40.50.620">
    <property type="entry name" value="HUPs"/>
    <property type="match status" value="1"/>
</dbReference>
<dbReference type="Gene3D" id="1.10.730.10">
    <property type="entry name" value="Isoleucyl-tRNA Synthetase, Domain 1"/>
    <property type="match status" value="1"/>
</dbReference>
<dbReference type="HAMAP" id="MF_00123">
    <property type="entry name" value="Arg_tRNA_synth"/>
    <property type="match status" value="1"/>
</dbReference>
<dbReference type="InterPro" id="IPR001412">
    <property type="entry name" value="aa-tRNA-synth_I_CS"/>
</dbReference>
<dbReference type="InterPro" id="IPR001278">
    <property type="entry name" value="Arg-tRNA-ligase"/>
</dbReference>
<dbReference type="InterPro" id="IPR005148">
    <property type="entry name" value="Arg-tRNA-synth_N"/>
</dbReference>
<dbReference type="InterPro" id="IPR036695">
    <property type="entry name" value="Arg-tRNA-synth_N_sf"/>
</dbReference>
<dbReference type="InterPro" id="IPR035684">
    <property type="entry name" value="ArgRS_core"/>
</dbReference>
<dbReference type="InterPro" id="IPR008909">
    <property type="entry name" value="DALR_anticod-bd"/>
</dbReference>
<dbReference type="InterPro" id="IPR014729">
    <property type="entry name" value="Rossmann-like_a/b/a_fold"/>
</dbReference>
<dbReference type="InterPro" id="IPR009080">
    <property type="entry name" value="tRNAsynth_Ia_anticodon-bd"/>
</dbReference>
<dbReference type="NCBIfam" id="TIGR00456">
    <property type="entry name" value="argS"/>
    <property type="match status" value="1"/>
</dbReference>
<dbReference type="PANTHER" id="PTHR11956:SF5">
    <property type="entry name" value="ARGININE--TRNA LIGASE, CYTOPLASMIC"/>
    <property type="match status" value="1"/>
</dbReference>
<dbReference type="PANTHER" id="PTHR11956">
    <property type="entry name" value="ARGINYL-TRNA SYNTHETASE"/>
    <property type="match status" value="1"/>
</dbReference>
<dbReference type="Pfam" id="PF03485">
    <property type="entry name" value="Arg_tRNA_synt_N"/>
    <property type="match status" value="1"/>
</dbReference>
<dbReference type="Pfam" id="PF05746">
    <property type="entry name" value="DALR_1"/>
    <property type="match status" value="1"/>
</dbReference>
<dbReference type="Pfam" id="PF00750">
    <property type="entry name" value="tRNA-synt_1d"/>
    <property type="match status" value="1"/>
</dbReference>
<dbReference type="PRINTS" id="PR01038">
    <property type="entry name" value="TRNASYNTHARG"/>
</dbReference>
<dbReference type="SMART" id="SM01016">
    <property type="entry name" value="Arg_tRNA_synt_N"/>
    <property type="match status" value="1"/>
</dbReference>
<dbReference type="SMART" id="SM00836">
    <property type="entry name" value="DALR_1"/>
    <property type="match status" value="1"/>
</dbReference>
<dbReference type="SUPFAM" id="SSF47323">
    <property type="entry name" value="Anticodon-binding domain of a subclass of class I aminoacyl-tRNA synthetases"/>
    <property type="match status" value="1"/>
</dbReference>
<dbReference type="SUPFAM" id="SSF55190">
    <property type="entry name" value="Arginyl-tRNA synthetase (ArgRS), N-terminal 'additional' domain"/>
    <property type="match status" value="1"/>
</dbReference>
<dbReference type="SUPFAM" id="SSF52374">
    <property type="entry name" value="Nucleotidylyl transferase"/>
    <property type="match status" value="1"/>
</dbReference>
<dbReference type="PROSITE" id="PS00178">
    <property type="entry name" value="AA_TRNA_LIGASE_I"/>
    <property type="match status" value="1"/>
</dbReference>
<comment type="catalytic activity">
    <reaction evidence="1">
        <text>tRNA(Arg) + L-arginine + ATP = L-arginyl-tRNA(Arg) + AMP + diphosphate</text>
        <dbReference type="Rhea" id="RHEA:20301"/>
        <dbReference type="Rhea" id="RHEA-COMP:9658"/>
        <dbReference type="Rhea" id="RHEA-COMP:9673"/>
        <dbReference type="ChEBI" id="CHEBI:30616"/>
        <dbReference type="ChEBI" id="CHEBI:32682"/>
        <dbReference type="ChEBI" id="CHEBI:33019"/>
        <dbReference type="ChEBI" id="CHEBI:78442"/>
        <dbReference type="ChEBI" id="CHEBI:78513"/>
        <dbReference type="ChEBI" id="CHEBI:456215"/>
        <dbReference type="EC" id="6.1.1.19"/>
    </reaction>
</comment>
<comment type="subunit">
    <text evidence="1">Monomer.</text>
</comment>
<comment type="subcellular location">
    <subcellularLocation>
        <location evidence="1">Cytoplasm</location>
    </subcellularLocation>
</comment>
<comment type="similarity">
    <text evidence="1">Belongs to the class-I aminoacyl-tRNA synthetase family.</text>
</comment>
<name>SYR_CUPMC</name>
<organism>
    <name type="scientific">Cupriavidus metallidurans (strain ATCC 43123 / DSM 2839 / NBRC 102507 / CH34)</name>
    <name type="common">Ralstonia metallidurans</name>
    <dbReference type="NCBI Taxonomy" id="266264"/>
    <lineage>
        <taxon>Bacteria</taxon>
        <taxon>Pseudomonadati</taxon>
        <taxon>Pseudomonadota</taxon>
        <taxon>Betaproteobacteria</taxon>
        <taxon>Burkholderiales</taxon>
        <taxon>Burkholderiaceae</taxon>
        <taxon>Cupriavidus</taxon>
    </lineage>
</organism>
<evidence type="ECO:0000255" key="1">
    <source>
        <dbReference type="HAMAP-Rule" id="MF_00123"/>
    </source>
</evidence>